<keyword id="KW-0119">Carbohydrate metabolism</keyword>
<keyword id="KW-0313">Glucose metabolism</keyword>
<keyword id="KW-0378">Hydrolase</keyword>
<organism>
    <name type="scientific">Yersinia pseudotuberculosis serotype IB (strain PB1/+)</name>
    <dbReference type="NCBI Taxonomy" id="502801"/>
    <lineage>
        <taxon>Bacteria</taxon>
        <taxon>Pseudomonadati</taxon>
        <taxon>Pseudomonadota</taxon>
        <taxon>Gammaproteobacteria</taxon>
        <taxon>Enterobacterales</taxon>
        <taxon>Yersiniaceae</taxon>
        <taxon>Yersinia</taxon>
    </lineage>
</organism>
<name>6PGL_YERPB</name>
<sequence length="334" mass="36445">MKQAVYVASPDSQQIHVWQLDSAGELTLLQTVDVPGQVQPMAISPNQRHLYVGVRPDFGIVSYHIADDGTLTAAGMAPLPGSPTHIDTDRQGRFLFSASYSFNCVSISPIDTHGVVQAPIQQLDDLPAPHSANIDPTNQILLVPCLKEDKVRLFDLSAEGQLTPHAQADITVAAGAGPRHMAFHPNHQVAYCVNELNSSVDVYQISNNGQEYHLVQSLDAMPADFTGTRWAADIHITPNGRYLYISDRTANLLGIFTVSKDGRVISLVGHHLTEAQPRGFNIDHSGNFLIASGQKSDHIEVYRIDQNTGELTTLKRYPVGKGPMWVSIRGAQNS</sequence>
<feature type="chain" id="PRO_1000148170" description="6-phosphogluconolactonase">
    <location>
        <begin position="1"/>
        <end position="334"/>
    </location>
</feature>
<gene>
    <name evidence="1" type="primary">pgl</name>
    <name type="ordered locus">YPTS_1259</name>
</gene>
<proteinExistence type="inferred from homology"/>
<accession>B2K8S8</accession>
<reference key="1">
    <citation type="submission" date="2008-04" db="EMBL/GenBank/DDBJ databases">
        <title>Complete sequence of Yersinia pseudotuberculosis PB1/+.</title>
        <authorList>
            <person name="Copeland A."/>
            <person name="Lucas S."/>
            <person name="Lapidus A."/>
            <person name="Glavina del Rio T."/>
            <person name="Dalin E."/>
            <person name="Tice H."/>
            <person name="Bruce D."/>
            <person name="Goodwin L."/>
            <person name="Pitluck S."/>
            <person name="Munk A.C."/>
            <person name="Brettin T."/>
            <person name="Detter J.C."/>
            <person name="Han C."/>
            <person name="Tapia R."/>
            <person name="Schmutz J."/>
            <person name="Larimer F."/>
            <person name="Land M."/>
            <person name="Hauser L."/>
            <person name="Challacombe J.F."/>
            <person name="Green L."/>
            <person name="Lindler L.E."/>
            <person name="Nikolich M.P."/>
            <person name="Richardson P."/>
        </authorList>
    </citation>
    <scope>NUCLEOTIDE SEQUENCE [LARGE SCALE GENOMIC DNA]</scope>
    <source>
        <strain>PB1/+</strain>
    </source>
</reference>
<evidence type="ECO:0000255" key="1">
    <source>
        <dbReference type="HAMAP-Rule" id="MF_01605"/>
    </source>
</evidence>
<comment type="function">
    <text evidence="1">Catalyzes the hydrolysis of 6-phosphogluconolactone to 6-phosphogluconate.</text>
</comment>
<comment type="catalytic activity">
    <reaction evidence="1">
        <text>6-phospho-D-glucono-1,5-lactone + H2O = 6-phospho-D-gluconate + H(+)</text>
        <dbReference type="Rhea" id="RHEA:12556"/>
        <dbReference type="ChEBI" id="CHEBI:15377"/>
        <dbReference type="ChEBI" id="CHEBI:15378"/>
        <dbReference type="ChEBI" id="CHEBI:57955"/>
        <dbReference type="ChEBI" id="CHEBI:58759"/>
        <dbReference type="EC" id="3.1.1.31"/>
    </reaction>
</comment>
<comment type="pathway">
    <text evidence="1">Carbohydrate degradation; pentose phosphate pathway; D-ribulose 5-phosphate from D-glucose 6-phosphate (oxidative stage): step 2/3.</text>
</comment>
<comment type="similarity">
    <text evidence="1">Belongs to the cycloisomerase 2 family.</text>
</comment>
<dbReference type="EC" id="3.1.1.31" evidence="1"/>
<dbReference type="EMBL" id="CP001048">
    <property type="protein sequence ID" value="ACC88234.1"/>
    <property type="molecule type" value="Genomic_DNA"/>
</dbReference>
<dbReference type="RefSeq" id="WP_011191955.1">
    <property type="nucleotide sequence ID" value="NZ_CP009780.1"/>
</dbReference>
<dbReference type="SMR" id="B2K8S8"/>
<dbReference type="GeneID" id="49786747"/>
<dbReference type="KEGG" id="ypb:YPTS_1259"/>
<dbReference type="PATRIC" id="fig|502801.10.peg.608"/>
<dbReference type="UniPathway" id="UPA00115">
    <property type="reaction ID" value="UER00409"/>
</dbReference>
<dbReference type="GO" id="GO:0005829">
    <property type="term" value="C:cytosol"/>
    <property type="evidence" value="ECO:0007669"/>
    <property type="project" value="TreeGrafter"/>
</dbReference>
<dbReference type="GO" id="GO:0017057">
    <property type="term" value="F:6-phosphogluconolactonase activity"/>
    <property type="evidence" value="ECO:0007669"/>
    <property type="project" value="UniProtKB-UniRule"/>
</dbReference>
<dbReference type="GO" id="GO:0006006">
    <property type="term" value="P:glucose metabolic process"/>
    <property type="evidence" value="ECO:0007669"/>
    <property type="project" value="UniProtKB-KW"/>
</dbReference>
<dbReference type="GO" id="GO:0009051">
    <property type="term" value="P:pentose-phosphate shunt, oxidative branch"/>
    <property type="evidence" value="ECO:0007669"/>
    <property type="project" value="UniProtKB-UniRule"/>
</dbReference>
<dbReference type="FunFam" id="2.130.10.10:FF:000051">
    <property type="entry name" value="6-phosphogluconolactonase"/>
    <property type="match status" value="1"/>
</dbReference>
<dbReference type="Gene3D" id="2.130.10.10">
    <property type="entry name" value="YVTN repeat-like/Quinoprotein amine dehydrogenase"/>
    <property type="match status" value="1"/>
</dbReference>
<dbReference type="HAMAP" id="MF_01605">
    <property type="entry name" value="6P_gluconolactonase"/>
    <property type="match status" value="1"/>
</dbReference>
<dbReference type="InterPro" id="IPR022528">
    <property type="entry name" value="6-phosphogluconolactonase_YbhE"/>
</dbReference>
<dbReference type="InterPro" id="IPR050282">
    <property type="entry name" value="Cycloisomerase_2"/>
</dbReference>
<dbReference type="InterPro" id="IPR019405">
    <property type="entry name" value="Lactonase_7-beta_prop"/>
</dbReference>
<dbReference type="InterPro" id="IPR011045">
    <property type="entry name" value="N2O_reductase_N"/>
</dbReference>
<dbReference type="InterPro" id="IPR015943">
    <property type="entry name" value="WD40/YVTN_repeat-like_dom_sf"/>
</dbReference>
<dbReference type="NCBIfam" id="NF008258">
    <property type="entry name" value="PRK11028.1"/>
    <property type="match status" value="1"/>
</dbReference>
<dbReference type="PANTHER" id="PTHR30344:SF1">
    <property type="entry name" value="6-PHOSPHOGLUCONOLACTONASE"/>
    <property type="match status" value="1"/>
</dbReference>
<dbReference type="PANTHER" id="PTHR30344">
    <property type="entry name" value="6-PHOSPHOGLUCONOLACTONASE-RELATED"/>
    <property type="match status" value="1"/>
</dbReference>
<dbReference type="Pfam" id="PF10282">
    <property type="entry name" value="Lactonase"/>
    <property type="match status" value="1"/>
</dbReference>
<dbReference type="SUPFAM" id="SSF50974">
    <property type="entry name" value="Nitrous oxide reductase, N-terminal domain"/>
    <property type="match status" value="1"/>
</dbReference>
<protein>
    <recommendedName>
        <fullName evidence="1">6-phosphogluconolactonase</fullName>
        <shortName evidence="1">6-P-gluconolactonase</shortName>
        <ecNumber evidence="1">3.1.1.31</ecNumber>
    </recommendedName>
</protein>